<evidence type="ECO:0000255" key="1">
    <source>
        <dbReference type="HAMAP-Rule" id="MF_00629"/>
    </source>
</evidence>
<evidence type="ECO:0000305" key="2"/>
<gene>
    <name evidence="1" type="primary">rpl39e</name>
    <name type="ordered locus">Tneu_1678</name>
</gene>
<feature type="chain" id="PRO_1000130582" description="Large ribosomal subunit protein eL39">
    <location>
        <begin position="1"/>
        <end position="51"/>
    </location>
</feature>
<proteinExistence type="inferred from homology"/>
<reference key="1">
    <citation type="submission" date="2008-03" db="EMBL/GenBank/DDBJ databases">
        <title>Complete sequence of Thermoproteus neutrophilus V24Sta.</title>
        <authorList>
            <consortium name="US DOE Joint Genome Institute"/>
            <person name="Copeland A."/>
            <person name="Lucas S."/>
            <person name="Lapidus A."/>
            <person name="Glavina del Rio T."/>
            <person name="Dalin E."/>
            <person name="Tice H."/>
            <person name="Bruce D."/>
            <person name="Goodwin L."/>
            <person name="Pitluck S."/>
            <person name="Sims D."/>
            <person name="Brettin T."/>
            <person name="Detter J.C."/>
            <person name="Han C."/>
            <person name="Kuske C.R."/>
            <person name="Schmutz J."/>
            <person name="Larimer F."/>
            <person name="Land M."/>
            <person name="Hauser L."/>
            <person name="Kyrpides N."/>
            <person name="Mikhailova N."/>
            <person name="Biddle J.F."/>
            <person name="Zhang Z."/>
            <person name="Fitz-Gibbon S.T."/>
            <person name="Lowe T.M."/>
            <person name="Saltikov C."/>
            <person name="House C.H."/>
            <person name="Richardson P."/>
        </authorList>
    </citation>
    <scope>NUCLEOTIDE SEQUENCE [LARGE SCALE GENOMIC DNA]</scope>
    <source>
        <strain>DSM 2338 / JCM 9278 / NBRC 100436 / V24Sta</strain>
    </source>
</reference>
<organism>
    <name type="scientific">Pyrobaculum neutrophilum (strain DSM 2338 / JCM 9278 / NBRC 100436 / V24Sta)</name>
    <name type="common">Thermoproteus neutrophilus</name>
    <dbReference type="NCBI Taxonomy" id="444157"/>
    <lineage>
        <taxon>Archaea</taxon>
        <taxon>Thermoproteota</taxon>
        <taxon>Thermoprotei</taxon>
        <taxon>Thermoproteales</taxon>
        <taxon>Thermoproteaceae</taxon>
        <taxon>Pyrobaculum</taxon>
    </lineage>
</organism>
<comment type="similarity">
    <text evidence="1">Belongs to the eukaryotic ribosomal protein eL39 family.</text>
</comment>
<sequence length="51" mass="5995">MARNKPLGKKLRLAAALRSNRNPPVWVVAKTKRRVVRSPARRHWRRVKLKA</sequence>
<keyword id="KW-0687">Ribonucleoprotein</keyword>
<keyword id="KW-0689">Ribosomal protein</keyword>
<dbReference type="EMBL" id="CP001014">
    <property type="protein sequence ID" value="ACB40600.1"/>
    <property type="molecule type" value="Genomic_DNA"/>
</dbReference>
<dbReference type="RefSeq" id="WP_012351019.1">
    <property type="nucleotide sequence ID" value="NC_010525.1"/>
</dbReference>
<dbReference type="SMR" id="B1YAF1"/>
<dbReference type="STRING" id="444157.Tneu_1678"/>
<dbReference type="GeneID" id="6165267"/>
<dbReference type="KEGG" id="tne:Tneu_1678"/>
<dbReference type="eggNOG" id="arCOG04177">
    <property type="taxonomic scope" value="Archaea"/>
</dbReference>
<dbReference type="HOGENOM" id="CLU_181948_4_0_2"/>
<dbReference type="OrthoDB" id="65887at2157"/>
<dbReference type="Proteomes" id="UP000001694">
    <property type="component" value="Chromosome"/>
</dbReference>
<dbReference type="GO" id="GO:1990904">
    <property type="term" value="C:ribonucleoprotein complex"/>
    <property type="evidence" value="ECO:0007669"/>
    <property type="project" value="UniProtKB-KW"/>
</dbReference>
<dbReference type="GO" id="GO:0005840">
    <property type="term" value="C:ribosome"/>
    <property type="evidence" value="ECO:0007669"/>
    <property type="project" value="UniProtKB-KW"/>
</dbReference>
<dbReference type="GO" id="GO:0003735">
    <property type="term" value="F:structural constituent of ribosome"/>
    <property type="evidence" value="ECO:0007669"/>
    <property type="project" value="InterPro"/>
</dbReference>
<dbReference type="GO" id="GO:0006412">
    <property type="term" value="P:translation"/>
    <property type="evidence" value="ECO:0007669"/>
    <property type="project" value="UniProtKB-UniRule"/>
</dbReference>
<dbReference type="Gene3D" id="1.10.1620.10">
    <property type="entry name" value="Ribosomal protein L39e"/>
    <property type="match status" value="1"/>
</dbReference>
<dbReference type="HAMAP" id="MF_00629">
    <property type="entry name" value="Ribosomal_eL39"/>
    <property type="match status" value="1"/>
</dbReference>
<dbReference type="InterPro" id="IPR000077">
    <property type="entry name" value="Ribosomal_eL39"/>
</dbReference>
<dbReference type="InterPro" id="IPR020083">
    <property type="entry name" value="Ribosomal_eL39_CS"/>
</dbReference>
<dbReference type="InterPro" id="IPR023626">
    <property type="entry name" value="Ribosomal_eL39_dom_sf"/>
</dbReference>
<dbReference type="NCBIfam" id="NF002316">
    <property type="entry name" value="PRK01242.1"/>
    <property type="match status" value="1"/>
</dbReference>
<dbReference type="Pfam" id="PF00832">
    <property type="entry name" value="Ribosomal_L39"/>
    <property type="match status" value="1"/>
</dbReference>
<dbReference type="SUPFAM" id="SSF48662">
    <property type="entry name" value="Ribosomal protein L39e"/>
    <property type="match status" value="1"/>
</dbReference>
<dbReference type="PROSITE" id="PS00051">
    <property type="entry name" value="RIBOSOMAL_L39E"/>
    <property type="match status" value="1"/>
</dbReference>
<accession>B1YAF1</accession>
<name>RL39_PYRNV</name>
<protein>
    <recommendedName>
        <fullName evidence="1">Large ribosomal subunit protein eL39</fullName>
    </recommendedName>
    <alternativeName>
        <fullName evidence="2">50S ribosomal protein L39e</fullName>
    </alternativeName>
</protein>